<name>MINE_BLOPB</name>
<organism>
    <name type="scientific">Blochmanniella pennsylvanica (strain BPEN)</name>
    <dbReference type="NCBI Taxonomy" id="291272"/>
    <lineage>
        <taxon>Bacteria</taxon>
        <taxon>Pseudomonadati</taxon>
        <taxon>Pseudomonadota</taxon>
        <taxon>Gammaproteobacteria</taxon>
        <taxon>Enterobacterales</taxon>
        <taxon>Enterobacteriaceae</taxon>
        <taxon>ant endosymbionts</taxon>
        <taxon>Candidatus Blochmanniella</taxon>
    </lineage>
</organism>
<protein>
    <recommendedName>
        <fullName evidence="1">Cell division topological specificity factor</fullName>
    </recommendedName>
</protein>
<gene>
    <name evidence="1" type="primary">minE</name>
    <name type="ordered locus">BPEN_455</name>
</gene>
<comment type="function">
    <text evidence="1">Prevents the cell division inhibition by proteins MinC and MinD at internal division sites while permitting inhibition at polar sites. This ensures cell division at the proper site by restricting the formation of a division septum at the midpoint of the long axis of the cell.</text>
</comment>
<comment type="similarity">
    <text evidence="1">Belongs to the MinE family.</text>
</comment>
<reference key="1">
    <citation type="journal article" date="2005" name="Genome Res.">
        <title>Genome sequence of Blochmannia pennsylvanicus indicates parallel evolutionary trends among bacterial mutualists of insects.</title>
        <authorList>
            <person name="Degnan P.H."/>
            <person name="Lazarus A.B."/>
            <person name="Wernegreen J.J."/>
        </authorList>
    </citation>
    <scope>NUCLEOTIDE SEQUENCE [LARGE SCALE GENOMIC DNA]</scope>
    <source>
        <strain>BPEN</strain>
    </source>
</reference>
<evidence type="ECO:0000255" key="1">
    <source>
        <dbReference type="HAMAP-Rule" id="MF_00262"/>
    </source>
</evidence>
<feature type="chain" id="PRO_0000298075" description="Cell division topological specificity factor">
    <location>
        <begin position="1"/>
        <end position="87"/>
    </location>
</feature>
<keyword id="KW-0131">Cell cycle</keyword>
<keyword id="KW-0132">Cell division</keyword>
<keyword id="KW-1185">Reference proteome</keyword>
<accession>Q492M3</accession>
<dbReference type="EMBL" id="CP000016">
    <property type="protein sequence ID" value="AAZ41074.1"/>
    <property type="molecule type" value="Genomic_DNA"/>
</dbReference>
<dbReference type="RefSeq" id="WP_011282984.1">
    <property type="nucleotide sequence ID" value="NC_007292.1"/>
</dbReference>
<dbReference type="SMR" id="Q492M3"/>
<dbReference type="STRING" id="291272.BPEN_455"/>
<dbReference type="KEGG" id="bpn:BPEN_455"/>
<dbReference type="eggNOG" id="COG0851">
    <property type="taxonomic scope" value="Bacteria"/>
</dbReference>
<dbReference type="HOGENOM" id="CLU_137929_2_2_6"/>
<dbReference type="OrthoDB" id="9802655at2"/>
<dbReference type="Proteomes" id="UP000007794">
    <property type="component" value="Chromosome"/>
</dbReference>
<dbReference type="GO" id="GO:0051301">
    <property type="term" value="P:cell division"/>
    <property type="evidence" value="ECO:0007669"/>
    <property type="project" value="UniProtKB-KW"/>
</dbReference>
<dbReference type="GO" id="GO:0032955">
    <property type="term" value="P:regulation of division septum assembly"/>
    <property type="evidence" value="ECO:0007669"/>
    <property type="project" value="InterPro"/>
</dbReference>
<dbReference type="Gene3D" id="3.30.1070.10">
    <property type="entry name" value="Cell division topological specificity factor MinE"/>
    <property type="match status" value="1"/>
</dbReference>
<dbReference type="HAMAP" id="MF_00262">
    <property type="entry name" value="MinE"/>
    <property type="match status" value="1"/>
</dbReference>
<dbReference type="InterPro" id="IPR005527">
    <property type="entry name" value="MinE"/>
</dbReference>
<dbReference type="InterPro" id="IPR036707">
    <property type="entry name" value="MinE_sf"/>
</dbReference>
<dbReference type="NCBIfam" id="TIGR01215">
    <property type="entry name" value="minE"/>
    <property type="match status" value="1"/>
</dbReference>
<dbReference type="NCBIfam" id="NF001422">
    <property type="entry name" value="PRK00296.1"/>
    <property type="match status" value="1"/>
</dbReference>
<dbReference type="Pfam" id="PF03776">
    <property type="entry name" value="MinE"/>
    <property type="match status" value="1"/>
</dbReference>
<dbReference type="SUPFAM" id="SSF55229">
    <property type="entry name" value="Cell division protein MinE topological specificity domain"/>
    <property type="match status" value="1"/>
</dbReference>
<sequence>MVLVNFFFFRKKTPADIAKKRLQEIVSDHNIRNNFAPYFLPQLKKDLVQTISKYIHNPRILSIQLEKKDNNTSILKCKIIFFNEETQ</sequence>
<proteinExistence type="inferred from homology"/>